<reference key="1">
    <citation type="journal article" date="2008" name="J. Bacteriol.">
        <title>Complete genome sequence of uropathogenic Proteus mirabilis, a master of both adherence and motility.</title>
        <authorList>
            <person name="Pearson M.M."/>
            <person name="Sebaihia M."/>
            <person name="Churcher C."/>
            <person name="Quail M.A."/>
            <person name="Seshasayee A.S."/>
            <person name="Luscombe N.M."/>
            <person name="Abdellah Z."/>
            <person name="Arrosmith C."/>
            <person name="Atkin B."/>
            <person name="Chillingworth T."/>
            <person name="Hauser H."/>
            <person name="Jagels K."/>
            <person name="Moule S."/>
            <person name="Mungall K."/>
            <person name="Norbertczak H."/>
            <person name="Rabbinowitsch E."/>
            <person name="Walker D."/>
            <person name="Whithead S."/>
            <person name="Thomson N.R."/>
            <person name="Rather P.N."/>
            <person name="Parkhill J."/>
            <person name="Mobley H.L.T."/>
        </authorList>
    </citation>
    <scope>NUCLEOTIDE SEQUENCE [LARGE SCALE GENOMIC DNA]</scope>
    <source>
        <strain>HI4320</strain>
    </source>
</reference>
<gene>
    <name evidence="1" type="primary">mtnN</name>
    <name type="ordered locus">PMI0214</name>
</gene>
<dbReference type="EC" id="3.2.2.9" evidence="1"/>
<dbReference type="EMBL" id="AM942759">
    <property type="protein sequence ID" value="CAR40612.1"/>
    <property type="molecule type" value="Genomic_DNA"/>
</dbReference>
<dbReference type="RefSeq" id="WP_004244989.1">
    <property type="nucleotide sequence ID" value="NC_010554.1"/>
</dbReference>
<dbReference type="SMR" id="B4EUF0"/>
<dbReference type="EnsemblBacteria" id="CAR40612">
    <property type="protein sequence ID" value="CAR40612"/>
    <property type="gene ID" value="PMI0214"/>
</dbReference>
<dbReference type="GeneID" id="6802382"/>
<dbReference type="KEGG" id="pmr:PMI0214"/>
<dbReference type="eggNOG" id="COG0775">
    <property type="taxonomic scope" value="Bacteria"/>
</dbReference>
<dbReference type="HOGENOM" id="CLU_031248_2_2_6"/>
<dbReference type="UniPathway" id="UPA00904">
    <property type="reaction ID" value="UER00871"/>
</dbReference>
<dbReference type="Proteomes" id="UP000008319">
    <property type="component" value="Chromosome"/>
</dbReference>
<dbReference type="GO" id="GO:0005829">
    <property type="term" value="C:cytosol"/>
    <property type="evidence" value="ECO:0007669"/>
    <property type="project" value="TreeGrafter"/>
</dbReference>
<dbReference type="GO" id="GO:0008782">
    <property type="term" value="F:adenosylhomocysteine nucleosidase activity"/>
    <property type="evidence" value="ECO:0007669"/>
    <property type="project" value="UniProtKB-UniRule"/>
</dbReference>
<dbReference type="GO" id="GO:0008930">
    <property type="term" value="F:methylthioadenosine nucleosidase activity"/>
    <property type="evidence" value="ECO:0007669"/>
    <property type="project" value="UniProtKB-UniRule"/>
</dbReference>
<dbReference type="GO" id="GO:0019509">
    <property type="term" value="P:L-methionine salvage from methylthioadenosine"/>
    <property type="evidence" value="ECO:0007669"/>
    <property type="project" value="UniProtKB-UniRule"/>
</dbReference>
<dbReference type="GO" id="GO:0019284">
    <property type="term" value="P:L-methionine salvage from S-adenosylmethionine"/>
    <property type="evidence" value="ECO:0007669"/>
    <property type="project" value="TreeGrafter"/>
</dbReference>
<dbReference type="GO" id="GO:0046124">
    <property type="term" value="P:purine deoxyribonucleoside catabolic process"/>
    <property type="evidence" value="ECO:0007669"/>
    <property type="project" value="UniProtKB-UniRule"/>
</dbReference>
<dbReference type="CDD" id="cd09008">
    <property type="entry name" value="MTAN"/>
    <property type="match status" value="1"/>
</dbReference>
<dbReference type="FunFam" id="3.40.50.1580:FF:000001">
    <property type="entry name" value="MTA/SAH nucleosidase family protein"/>
    <property type="match status" value="1"/>
</dbReference>
<dbReference type="Gene3D" id="3.40.50.1580">
    <property type="entry name" value="Nucleoside phosphorylase domain"/>
    <property type="match status" value="1"/>
</dbReference>
<dbReference type="HAMAP" id="MF_01684">
    <property type="entry name" value="Salvage_MtnN"/>
    <property type="match status" value="1"/>
</dbReference>
<dbReference type="InterPro" id="IPR010049">
    <property type="entry name" value="MTA_SAH_Nsdase"/>
</dbReference>
<dbReference type="InterPro" id="IPR000845">
    <property type="entry name" value="Nucleoside_phosphorylase_d"/>
</dbReference>
<dbReference type="InterPro" id="IPR035994">
    <property type="entry name" value="Nucleoside_phosphorylase_sf"/>
</dbReference>
<dbReference type="NCBIfam" id="TIGR01704">
    <property type="entry name" value="MTA_SAH-Nsdase"/>
    <property type="match status" value="1"/>
</dbReference>
<dbReference type="NCBIfam" id="NF004079">
    <property type="entry name" value="PRK05584.1"/>
    <property type="match status" value="1"/>
</dbReference>
<dbReference type="PANTHER" id="PTHR46832">
    <property type="entry name" value="5'-METHYLTHIOADENOSINE/S-ADENOSYLHOMOCYSTEINE NUCLEOSIDASE"/>
    <property type="match status" value="1"/>
</dbReference>
<dbReference type="PANTHER" id="PTHR46832:SF1">
    <property type="entry name" value="5'-METHYLTHIOADENOSINE_S-ADENOSYLHOMOCYSTEINE NUCLEOSIDASE"/>
    <property type="match status" value="1"/>
</dbReference>
<dbReference type="Pfam" id="PF01048">
    <property type="entry name" value="PNP_UDP_1"/>
    <property type="match status" value="1"/>
</dbReference>
<dbReference type="SUPFAM" id="SSF53167">
    <property type="entry name" value="Purine and uridine phosphorylases"/>
    <property type="match status" value="1"/>
</dbReference>
<feature type="chain" id="PRO_0000359323" description="5'-methylthioadenosine/S-adenosylhomocysteine nucleosidase">
    <location>
        <begin position="1"/>
        <end position="235"/>
    </location>
</feature>
<feature type="active site" description="Proton acceptor" evidence="1">
    <location>
        <position position="12"/>
    </location>
</feature>
<feature type="active site" description="Proton donor" evidence="1">
    <location>
        <position position="197"/>
    </location>
</feature>
<feature type="binding site" evidence="1">
    <location>
        <position position="78"/>
    </location>
    <ligand>
        <name>substrate</name>
    </ligand>
</feature>
<feature type="binding site" evidence="1">
    <location>
        <position position="152"/>
    </location>
    <ligand>
        <name>substrate</name>
    </ligand>
</feature>
<feature type="binding site" evidence="1">
    <location>
        <begin position="173"/>
        <end position="174"/>
    </location>
    <ligand>
        <name>substrate</name>
    </ligand>
</feature>
<name>MTNN_PROMH</name>
<sequence length="235" mass="25208">MRVGVIGAMEQEVKLLREQIENCEIVSRGGCEIYTGKINGVDVALLKSGIGKVAAAIGTTLLLEHFRPDVVINTGSAGGLDAKLNVGDIVVSTEVRYHDADVTAFGYEPGQMAQCPPAFIADPKLVNIAQECIGSLKLNAVRGLICSGDAFINGAEPLARIRRTFPEVVAVEMESTAIGHVCHQFDTPFVVVRAISDVADKESHLSFDEFLSVAAQQSSLMVTTMLDKLKTETQF</sequence>
<keyword id="KW-0028">Amino-acid biosynthesis</keyword>
<keyword id="KW-0378">Hydrolase</keyword>
<keyword id="KW-0486">Methionine biosynthesis</keyword>
<keyword id="KW-1185">Reference proteome</keyword>
<comment type="function">
    <text evidence="1">Catalyzes the irreversible cleavage of the glycosidic bond in both 5'-methylthioadenosine (MTA) and S-adenosylhomocysteine (SAH/AdoHcy) to adenine and the corresponding thioribose, 5'-methylthioribose and S-ribosylhomocysteine, respectively. Also cleaves 5'-deoxyadenosine, a toxic by-product of radical S-adenosylmethionine (SAM) enzymes, into 5-deoxyribose and adenine. Thus, is required for in vivo function of the radical SAM enzymes biotin synthase and lipoic acid synthase, that are inhibited by 5'-deoxyadenosine accumulation.</text>
</comment>
<comment type="catalytic activity">
    <reaction evidence="1">
        <text>S-adenosyl-L-homocysteine + H2O = S-(5-deoxy-D-ribos-5-yl)-L-homocysteine + adenine</text>
        <dbReference type="Rhea" id="RHEA:17805"/>
        <dbReference type="ChEBI" id="CHEBI:15377"/>
        <dbReference type="ChEBI" id="CHEBI:16708"/>
        <dbReference type="ChEBI" id="CHEBI:57856"/>
        <dbReference type="ChEBI" id="CHEBI:58195"/>
        <dbReference type="EC" id="3.2.2.9"/>
    </reaction>
</comment>
<comment type="catalytic activity">
    <reaction evidence="1">
        <text>S-methyl-5'-thioadenosine + H2O = 5-(methylsulfanyl)-D-ribose + adenine</text>
        <dbReference type="Rhea" id="RHEA:13617"/>
        <dbReference type="ChEBI" id="CHEBI:15377"/>
        <dbReference type="ChEBI" id="CHEBI:16708"/>
        <dbReference type="ChEBI" id="CHEBI:17509"/>
        <dbReference type="ChEBI" id="CHEBI:78440"/>
        <dbReference type="EC" id="3.2.2.9"/>
    </reaction>
</comment>
<comment type="catalytic activity">
    <reaction evidence="1">
        <text>5'-deoxyadenosine + H2O = 5-deoxy-D-ribose + adenine</text>
        <dbReference type="Rhea" id="RHEA:29859"/>
        <dbReference type="ChEBI" id="CHEBI:15377"/>
        <dbReference type="ChEBI" id="CHEBI:16708"/>
        <dbReference type="ChEBI" id="CHEBI:17319"/>
        <dbReference type="ChEBI" id="CHEBI:149540"/>
        <dbReference type="EC" id="3.2.2.9"/>
    </reaction>
    <physiologicalReaction direction="left-to-right" evidence="1">
        <dbReference type="Rhea" id="RHEA:29860"/>
    </physiologicalReaction>
</comment>
<comment type="pathway">
    <text evidence="1">Amino-acid biosynthesis; L-methionine biosynthesis via salvage pathway; S-methyl-5-thio-alpha-D-ribose 1-phosphate from S-methyl-5'-thioadenosine (hydrolase route): step 1/2.</text>
</comment>
<comment type="subunit">
    <text evidence="1">Homodimer.</text>
</comment>
<comment type="similarity">
    <text evidence="1">Belongs to the PNP/UDP phosphorylase family. MtnN subfamily.</text>
</comment>
<accession>B4EUF0</accession>
<evidence type="ECO:0000255" key="1">
    <source>
        <dbReference type="HAMAP-Rule" id="MF_01684"/>
    </source>
</evidence>
<proteinExistence type="inferred from homology"/>
<protein>
    <recommendedName>
        <fullName evidence="1">5'-methylthioadenosine/S-adenosylhomocysteine nucleosidase</fullName>
        <shortName evidence="1">MTA/SAH nucleosidase</shortName>
        <shortName evidence="1">MTAN</shortName>
        <ecNumber evidence="1">3.2.2.9</ecNumber>
    </recommendedName>
    <alternativeName>
        <fullName evidence="1">5'-deoxyadenosine nucleosidase</fullName>
        <shortName evidence="1">DOA nucleosidase</shortName>
        <shortName evidence="1">dAdo nucleosidase</shortName>
    </alternativeName>
    <alternativeName>
        <fullName evidence="1">5'-methylthioadenosine nucleosidase</fullName>
        <shortName evidence="1">MTA nucleosidase</shortName>
    </alternativeName>
    <alternativeName>
        <fullName evidence="1">S-adenosylhomocysteine nucleosidase</fullName>
        <shortName evidence="1">AdoHcy nucleosidase</shortName>
        <shortName evidence="1">SAH nucleosidase</shortName>
        <shortName evidence="1">SRH nucleosidase</shortName>
    </alternativeName>
</protein>
<organism>
    <name type="scientific">Proteus mirabilis (strain HI4320)</name>
    <dbReference type="NCBI Taxonomy" id="529507"/>
    <lineage>
        <taxon>Bacteria</taxon>
        <taxon>Pseudomonadati</taxon>
        <taxon>Pseudomonadota</taxon>
        <taxon>Gammaproteobacteria</taxon>
        <taxon>Enterobacterales</taxon>
        <taxon>Morganellaceae</taxon>
        <taxon>Proteus</taxon>
    </lineage>
</organism>